<proteinExistence type="evidence at transcript level"/>
<reference key="1">
    <citation type="submission" date="2006-03" db="EMBL/GenBank/DDBJ databases">
        <authorList>
            <consortium name="Sanger Xenopus tropicalis EST/cDNA project"/>
        </authorList>
    </citation>
    <scope>NUCLEOTIDE SEQUENCE [LARGE SCALE MRNA]</scope>
    <source>
        <tissue>Tadpole</tissue>
    </source>
</reference>
<reference key="2">
    <citation type="submission" date="2004-08" db="EMBL/GenBank/DDBJ databases">
        <authorList>
            <consortium name="NIH - Xenopus Gene Collection (XGC) project"/>
        </authorList>
    </citation>
    <scope>NUCLEOTIDE SEQUENCE [LARGE SCALE MRNA]</scope>
    <source>
        <tissue>Embryo</tissue>
    </source>
</reference>
<feature type="chain" id="PRO_0000234547" description="Biogenesis of lysosome-related organelles complex 1 subunit 2">
    <location>
        <begin position="1"/>
        <end position="147"/>
    </location>
</feature>
<feature type="region of interest" description="Disordered" evidence="3">
    <location>
        <begin position="1"/>
        <end position="41"/>
    </location>
</feature>
<feature type="coiled-coil region" evidence="2">
    <location>
        <begin position="84"/>
        <end position="132"/>
    </location>
</feature>
<feature type="compositionally biased region" description="Acidic residues" evidence="3">
    <location>
        <begin position="26"/>
        <end position="41"/>
    </location>
</feature>
<accession>Q66KB9</accession>
<organism>
    <name type="scientific">Xenopus tropicalis</name>
    <name type="common">Western clawed frog</name>
    <name type="synonym">Silurana tropicalis</name>
    <dbReference type="NCBI Taxonomy" id="8364"/>
    <lineage>
        <taxon>Eukaryota</taxon>
        <taxon>Metazoa</taxon>
        <taxon>Chordata</taxon>
        <taxon>Craniata</taxon>
        <taxon>Vertebrata</taxon>
        <taxon>Euteleostomi</taxon>
        <taxon>Amphibia</taxon>
        <taxon>Batrachia</taxon>
        <taxon>Anura</taxon>
        <taxon>Pipoidea</taxon>
        <taxon>Pipidae</taxon>
        <taxon>Xenopodinae</taxon>
        <taxon>Xenopus</taxon>
        <taxon>Silurana</taxon>
    </lineage>
</organism>
<comment type="function">
    <text evidence="1">Component of the BLOC-1 complex, a complex that is required for normal biogenesis of lysosome-related organelles (LRO), such as platelet dense granules and melanosomes. May also play a role in intracellular vesicle trafficking. As part of a BORC-like complex may play a role in lysosomes movement and localization at the cell periphery. Associated with the cytosolic face of lysosomes, this complex may couple lysosomes to microtubule plus-end-directed kinesin motor.</text>
</comment>
<comment type="subunit">
    <text evidence="1">Component of the biogenesis of lysosome-related organelles complex 1 (BLOC-1).</text>
</comment>
<comment type="subcellular location">
    <subcellularLocation>
        <location evidence="1">Cytoplasm</location>
        <location evidence="1">Cytoskeleton</location>
        <location evidence="1">Microtubule organizing center</location>
        <location evidence="1">Centrosome</location>
    </subcellularLocation>
    <subcellularLocation>
        <location evidence="1">Lysosome membrane</location>
    </subcellularLocation>
</comment>
<comment type="similarity">
    <text evidence="4">Belongs to the BLOC1S2 family.</text>
</comment>
<name>BL1S2_XENTR</name>
<keyword id="KW-0175">Coiled coil</keyword>
<keyword id="KW-0963">Cytoplasm</keyword>
<keyword id="KW-0206">Cytoskeleton</keyword>
<keyword id="KW-0458">Lysosome</keyword>
<keyword id="KW-0472">Membrane</keyword>
<keyword id="KW-1185">Reference proteome</keyword>
<sequence>MAEQEGPDKPPLNEQPVAPSASQDDATVETAEEAVEPPEADINELCRDMFSKMALYLTGELTTTSEDYKLLENMNKLTSLKYMEMKDIAGNISRNLKDLNKKYASLQPYLEQINQIEEQVASLENAAYKLDAYSKRLEAKFKKLEKR</sequence>
<dbReference type="EMBL" id="CR760883">
    <property type="protein sequence ID" value="CAJ83190.1"/>
    <property type="molecule type" value="mRNA"/>
</dbReference>
<dbReference type="EMBL" id="BC080469">
    <property type="protein sequence ID" value="AAH80469.1"/>
    <property type="molecule type" value="mRNA"/>
</dbReference>
<dbReference type="RefSeq" id="NP_001008201.1">
    <property type="nucleotide sequence ID" value="NM_001008200.1"/>
</dbReference>
<dbReference type="RefSeq" id="XP_012821943.1">
    <property type="nucleotide sequence ID" value="XM_012966489.3"/>
</dbReference>
<dbReference type="RefSeq" id="XP_012821944.1">
    <property type="nucleotide sequence ID" value="XM_012966490.3"/>
</dbReference>
<dbReference type="SMR" id="Q66KB9"/>
<dbReference type="FunCoup" id="Q66KB9">
    <property type="interactions" value="312"/>
</dbReference>
<dbReference type="STRING" id="8364.ENSXETP00000009577"/>
<dbReference type="PaxDb" id="8364-ENSXETP00000050858"/>
<dbReference type="GeneID" id="493563"/>
<dbReference type="KEGG" id="xtr:493563"/>
<dbReference type="AGR" id="Xenbase:XB-GENE-967291"/>
<dbReference type="CTD" id="282991"/>
<dbReference type="Xenbase" id="XB-GENE-967291">
    <property type="gene designation" value="bloc1s2"/>
</dbReference>
<dbReference type="eggNOG" id="KOG4559">
    <property type="taxonomic scope" value="Eukaryota"/>
</dbReference>
<dbReference type="HOGENOM" id="CLU_110820_0_1_1"/>
<dbReference type="InParanoid" id="Q66KB9"/>
<dbReference type="OMA" id="CSDMFEK"/>
<dbReference type="OrthoDB" id="244061at2759"/>
<dbReference type="PhylomeDB" id="Q66KB9"/>
<dbReference type="TreeFam" id="TF313861"/>
<dbReference type="Proteomes" id="UP000008143">
    <property type="component" value="Chromosome 7"/>
</dbReference>
<dbReference type="Bgee" id="ENSXETG00000023568">
    <property type="expression patterns" value="Expressed in liver and 26 other cell types or tissues"/>
</dbReference>
<dbReference type="GO" id="GO:1904115">
    <property type="term" value="C:axon cytoplasm"/>
    <property type="evidence" value="ECO:0007669"/>
    <property type="project" value="GOC"/>
</dbReference>
<dbReference type="GO" id="GO:0099078">
    <property type="term" value="C:BORC complex"/>
    <property type="evidence" value="ECO:0000250"/>
    <property type="project" value="UniProtKB"/>
</dbReference>
<dbReference type="GO" id="GO:0005813">
    <property type="term" value="C:centrosome"/>
    <property type="evidence" value="ECO:0007669"/>
    <property type="project" value="UniProtKB-SubCell"/>
</dbReference>
<dbReference type="GO" id="GO:0005765">
    <property type="term" value="C:lysosomal membrane"/>
    <property type="evidence" value="ECO:0007669"/>
    <property type="project" value="UniProtKB-SubCell"/>
</dbReference>
<dbReference type="GO" id="GO:0008089">
    <property type="term" value="P:anterograde axonal transport"/>
    <property type="evidence" value="ECO:0000250"/>
    <property type="project" value="UniProtKB"/>
</dbReference>
<dbReference type="GO" id="GO:0048490">
    <property type="term" value="P:anterograde synaptic vesicle transport"/>
    <property type="evidence" value="ECO:0000250"/>
    <property type="project" value="UniProtKB"/>
</dbReference>
<dbReference type="GO" id="GO:0032418">
    <property type="term" value="P:lysosome localization"/>
    <property type="evidence" value="ECO:0000250"/>
    <property type="project" value="UniProtKB"/>
</dbReference>
<dbReference type="GO" id="GO:0031175">
    <property type="term" value="P:neuron projection development"/>
    <property type="evidence" value="ECO:0000250"/>
    <property type="project" value="UniProtKB"/>
</dbReference>
<dbReference type="InterPro" id="IPR019269">
    <property type="entry name" value="BLOC1_su2"/>
</dbReference>
<dbReference type="PANTHER" id="PTHR46479">
    <property type="entry name" value="BIOGENESIS OF LYSOSOME-RELATED ORGANELLES COMPLEX 1 SUBUNIT 2"/>
    <property type="match status" value="1"/>
</dbReference>
<dbReference type="PANTHER" id="PTHR46479:SF1">
    <property type="entry name" value="BIOGENESIS OF LYSOSOME-RELATED ORGANELLES COMPLEX 1 SUBUNIT 2"/>
    <property type="match status" value="1"/>
</dbReference>
<dbReference type="Pfam" id="PF10046">
    <property type="entry name" value="BLOC1_2"/>
    <property type="match status" value="1"/>
</dbReference>
<evidence type="ECO:0000250" key="1">
    <source>
        <dbReference type="UniProtKB" id="Q6QNY1"/>
    </source>
</evidence>
<evidence type="ECO:0000255" key="2"/>
<evidence type="ECO:0000256" key="3">
    <source>
        <dbReference type="SAM" id="MobiDB-lite"/>
    </source>
</evidence>
<evidence type="ECO:0000305" key="4"/>
<gene>
    <name type="primary">bloc1s2</name>
    <name type="ORF">TTpA018b22.1</name>
</gene>
<protein>
    <recommendedName>
        <fullName>Biogenesis of lysosome-related organelles complex 1 subunit 2</fullName>
        <shortName>BLOC-1 subunit 2</shortName>
    </recommendedName>
</protein>